<protein>
    <recommendedName>
        <fullName>Branched-chain-amino-acid aminotransferase, mitochondrial</fullName>
        <shortName>BCAT</shortName>
        <ecNumber>2.6.1.42</ecNumber>
    </recommendedName>
</protein>
<keyword id="KW-0028">Amino-acid biosynthesis</keyword>
<keyword id="KW-0032">Aminotransferase</keyword>
<keyword id="KW-0100">Branched-chain amino acid biosynthesis</keyword>
<keyword id="KW-0963">Cytoplasm</keyword>
<keyword id="KW-0496">Mitochondrion</keyword>
<keyword id="KW-0539">Nucleus</keyword>
<keyword id="KW-0663">Pyridoxal phosphate</keyword>
<keyword id="KW-1185">Reference proteome</keyword>
<keyword id="KW-0808">Transferase</keyword>
<keyword id="KW-0809">Transit peptide</keyword>
<dbReference type="EC" id="2.6.1.42"/>
<dbReference type="EMBL" id="U88029">
    <property type="protein sequence ID" value="AAC39352.1"/>
    <property type="status" value="ALT_SEQ"/>
    <property type="molecule type" value="Genomic_DNA"/>
</dbReference>
<dbReference type="EMBL" id="CU329671">
    <property type="protein sequence ID" value="CAB46675.2"/>
    <property type="molecule type" value="Genomic_DNA"/>
</dbReference>
<dbReference type="PIR" id="T40454">
    <property type="entry name" value="T40454"/>
</dbReference>
<dbReference type="RefSeq" id="NP_595180.2">
    <property type="nucleotide sequence ID" value="NM_001021088.2"/>
</dbReference>
<dbReference type="SMR" id="O14370"/>
<dbReference type="BioGRID" id="277349">
    <property type="interactions" value="35"/>
</dbReference>
<dbReference type="FunCoup" id="O14370">
    <property type="interactions" value="421"/>
</dbReference>
<dbReference type="STRING" id="284812.O14370"/>
<dbReference type="iPTMnet" id="O14370"/>
<dbReference type="PaxDb" id="4896-SPBC428.02c.1"/>
<dbReference type="EnsemblFungi" id="SPBC428.02c.1">
    <property type="protein sequence ID" value="SPBC428.02c.1:pep"/>
    <property type="gene ID" value="SPBC428.02c"/>
</dbReference>
<dbReference type="GeneID" id="2540831"/>
<dbReference type="KEGG" id="spo:2540831"/>
<dbReference type="PomBase" id="SPBC428.02c">
    <property type="gene designation" value="eca39"/>
</dbReference>
<dbReference type="VEuPathDB" id="FungiDB:SPBC428.02c"/>
<dbReference type="eggNOG" id="KOG0975">
    <property type="taxonomic scope" value="Eukaryota"/>
</dbReference>
<dbReference type="HOGENOM" id="CLU_031922_0_1_1"/>
<dbReference type="InParanoid" id="O14370"/>
<dbReference type="OMA" id="TDFRFIA"/>
<dbReference type="BRENDA" id="2.6.1.42">
    <property type="organism ID" value="5613"/>
</dbReference>
<dbReference type="Reactome" id="R-SPO-70895">
    <property type="pathway name" value="Branched-chain amino acid catabolism"/>
</dbReference>
<dbReference type="PRO" id="PR:O14370"/>
<dbReference type="Proteomes" id="UP000002485">
    <property type="component" value="Chromosome II"/>
</dbReference>
<dbReference type="GO" id="GO:0005759">
    <property type="term" value="C:mitochondrial matrix"/>
    <property type="evidence" value="ECO:0000316"/>
    <property type="project" value="PomBase"/>
</dbReference>
<dbReference type="GO" id="GO:0005739">
    <property type="term" value="C:mitochondrion"/>
    <property type="evidence" value="ECO:0000318"/>
    <property type="project" value="GO_Central"/>
</dbReference>
<dbReference type="GO" id="GO:0005634">
    <property type="term" value="C:nucleus"/>
    <property type="evidence" value="ECO:0000250"/>
    <property type="project" value="PomBase"/>
</dbReference>
<dbReference type="GO" id="GO:0004084">
    <property type="term" value="F:branched-chain-amino-acid transaminase activity"/>
    <property type="evidence" value="ECO:0000318"/>
    <property type="project" value="GO_Central"/>
</dbReference>
<dbReference type="GO" id="GO:0052656">
    <property type="term" value="F:L-isoleucine-2-oxoglutarate transaminase activity"/>
    <property type="evidence" value="ECO:0000316"/>
    <property type="project" value="PomBase"/>
</dbReference>
<dbReference type="GO" id="GO:0052654">
    <property type="term" value="F:L-leucine-2-oxoglutarate transaminase activity"/>
    <property type="evidence" value="ECO:0000316"/>
    <property type="project" value="PomBase"/>
</dbReference>
<dbReference type="GO" id="GO:0052655">
    <property type="term" value="F:L-valine-2-oxoglutarate transaminase activity"/>
    <property type="evidence" value="ECO:0000316"/>
    <property type="project" value="PomBase"/>
</dbReference>
<dbReference type="GO" id="GO:0030170">
    <property type="term" value="F:pyridoxal phosphate binding"/>
    <property type="evidence" value="ECO:0000250"/>
    <property type="project" value="PomBase"/>
</dbReference>
<dbReference type="GO" id="GO:1901705">
    <property type="term" value="P:L-isoleucine biosynthetic process"/>
    <property type="evidence" value="ECO:0000316"/>
    <property type="project" value="PomBase"/>
</dbReference>
<dbReference type="GO" id="GO:0009098">
    <property type="term" value="P:L-leucine biosynthetic process"/>
    <property type="evidence" value="ECO:0000316"/>
    <property type="project" value="PomBase"/>
</dbReference>
<dbReference type="GO" id="GO:0009099">
    <property type="term" value="P:L-valine biosynthetic process"/>
    <property type="evidence" value="ECO:0000316"/>
    <property type="project" value="PomBase"/>
</dbReference>
<dbReference type="CDD" id="cd01557">
    <property type="entry name" value="BCAT_beta_family"/>
    <property type="match status" value="1"/>
</dbReference>
<dbReference type="FunFam" id="3.20.10.10:FF:000004">
    <property type="entry name" value="Branched-chain-amino-acid aminotransferase"/>
    <property type="match status" value="1"/>
</dbReference>
<dbReference type="FunFam" id="3.30.470.10:FF:000005">
    <property type="entry name" value="Branched-chain-amino-acid aminotransferase"/>
    <property type="match status" value="1"/>
</dbReference>
<dbReference type="Gene3D" id="3.30.470.10">
    <property type="match status" value="1"/>
</dbReference>
<dbReference type="Gene3D" id="3.20.10.10">
    <property type="entry name" value="D-amino Acid Aminotransferase, subunit A, domain 2"/>
    <property type="match status" value="1"/>
</dbReference>
<dbReference type="InterPro" id="IPR001544">
    <property type="entry name" value="Aminotrans_IV"/>
</dbReference>
<dbReference type="InterPro" id="IPR018300">
    <property type="entry name" value="Aminotrans_IV_CS"/>
</dbReference>
<dbReference type="InterPro" id="IPR036038">
    <property type="entry name" value="Aminotransferase-like"/>
</dbReference>
<dbReference type="InterPro" id="IPR005786">
    <property type="entry name" value="B_amino_transII"/>
</dbReference>
<dbReference type="InterPro" id="IPR043132">
    <property type="entry name" value="BCAT-like_C"/>
</dbReference>
<dbReference type="InterPro" id="IPR043131">
    <property type="entry name" value="BCAT-like_N"/>
</dbReference>
<dbReference type="InterPro" id="IPR033939">
    <property type="entry name" value="BCAT_family"/>
</dbReference>
<dbReference type="NCBIfam" id="TIGR01123">
    <property type="entry name" value="ilvE_II"/>
    <property type="match status" value="1"/>
</dbReference>
<dbReference type="NCBIfam" id="NF009897">
    <property type="entry name" value="PRK13357.1"/>
    <property type="match status" value="1"/>
</dbReference>
<dbReference type="PANTHER" id="PTHR11825:SF44">
    <property type="entry name" value="BRANCHED-CHAIN-AMINO-ACID AMINOTRANSFERASE"/>
    <property type="match status" value="1"/>
</dbReference>
<dbReference type="PANTHER" id="PTHR11825">
    <property type="entry name" value="SUBGROUP IIII AMINOTRANSFERASE"/>
    <property type="match status" value="1"/>
</dbReference>
<dbReference type="Pfam" id="PF01063">
    <property type="entry name" value="Aminotran_4"/>
    <property type="match status" value="1"/>
</dbReference>
<dbReference type="PIRSF" id="PIRSF006468">
    <property type="entry name" value="BCAT1"/>
    <property type="match status" value="1"/>
</dbReference>
<dbReference type="SUPFAM" id="SSF56752">
    <property type="entry name" value="D-aminoacid aminotransferase-like PLP-dependent enzymes"/>
    <property type="match status" value="1"/>
</dbReference>
<dbReference type="PROSITE" id="PS00770">
    <property type="entry name" value="AA_TRANSFER_CLASS_4"/>
    <property type="match status" value="1"/>
</dbReference>
<sequence length="427" mass="47855">MSLMFLRRAGNIKGRNIRFALQRGSVGYSQQSSEACKNFLNTTQLRTMVQTAALHGPKPMDSSHIKVTNVKELKPLPEWKSLKFGENFTDHMLIMKWNREKGWSTPEIVPFGKLCFHPASSVFHYGFECFEGMKAFRDEKGVPRLFRPIKNAERMLSTGTRISLPSFDPAELAEIIRKFVAHENRWVPDQRGYSLYIRPTFIGTDEALGVHHCDNAMLYVIASPVGPYYSSGFKAVKLCCSEESVRAWPGGTGHYKLGGNYAPSVLPQKEAAKKGYAQILWLYGDEDYITEVGTMNCFTVWINKNGEKEIITAPLDGMILPGVTRDSILEICRERLAPKGWKITEGKYSMKEVAQASKEGRLLEVFGAGTAALVSPVKAINYKGTEYEIPMPEGQEAGPITSEISKWILDIQYGKEPNNPWSVPALP</sequence>
<feature type="transit peptide" description="Mitochondrion" evidence="2">
    <location>
        <begin position="1"/>
        <end position="47"/>
    </location>
</feature>
<feature type="chain" id="PRO_0000001280" description="Branched-chain-amino-acid aminotransferase, mitochondrial">
    <location>
        <begin position="48"/>
        <end position="427"/>
    </location>
</feature>
<feature type="modified residue" description="N6-(pyridoxal phosphate)lysine" evidence="1">
    <location>
        <position position="256"/>
    </location>
</feature>
<feature type="sequence conflict" description="In Ref. 1; AAC39352." evidence="5" ref="1">
    <original>VKLCCSEE</original>
    <variation>LSFVAPKK</variation>
    <location>
        <begin position="236"/>
        <end position="243"/>
    </location>
</feature>
<gene>
    <name type="primary">eca39</name>
    <name type="ORF">SPBC428.02c</name>
    <name type="ORF">SPBC582.12c</name>
</gene>
<reference key="1">
    <citation type="journal article" date="1998" name="Yeast">
        <title>Characterization of a branched-chain amino-acid aminotransferase from Schizosaccharomyces pombe.</title>
        <authorList>
            <person name="Eden A."/>
            <person name="Benvenisty N."/>
        </authorList>
    </citation>
    <scope>NUCLEOTIDE SEQUENCE [GENOMIC DNA]</scope>
    <scope>CATALYTIC ACTIVITY</scope>
</reference>
<reference key="2">
    <citation type="journal article" date="2002" name="Nature">
        <title>The genome sequence of Schizosaccharomyces pombe.</title>
        <authorList>
            <person name="Wood V."/>
            <person name="Gwilliam R."/>
            <person name="Rajandream M.A."/>
            <person name="Lyne M.H."/>
            <person name="Lyne R."/>
            <person name="Stewart A."/>
            <person name="Sgouros J.G."/>
            <person name="Peat N."/>
            <person name="Hayles J."/>
            <person name="Baker S.G."/>
            <person name="Basham D."/>
            <person name="Bowman S."/>
            <person name="Brooks K."/>
            <person name="Brown D."/>
            <person name="Brown S."/>
            <person name="Chillingworth T."/>
            <person name="Churcher C.M."/>
            <person name="Collins M."/>
            <person name="Connor R."/>
            <person name="Cronin A."/>
            <person name="Davis P."/>
            <person name="Feltwell T."/>
            <person name="Fraser A."/>
            <person name="Gentles S."/>
            <person name="Goble A."/>
            <person name="Hamlin N."/>
            <person name="Harris D.E."/>
            <person name="Hidalgo J."/>
            <person name="Hodgson G."/>
            <person name="Holroyd S."/>
            <person name="Hornsby T."/>
            <person name="Howarth S."/>
            <person name="Huckle E.J."/>
            <person name="Hunt S."/>
            <person name="Jagels K."/>
            <person name="James K.D."/>
            <person name="Jones L."/>
            <person name="Jones M."/>
            <person name="Leather S."/>
            <person name="McDonald S."/>
            <person name="McLean J."/>
            <person name="Mooney P."/>
            <person name="Moule S."/>
            <person name="Mungall K.L."/>
            <person name="Murphy L.D."/>
            <person name="Niblett D."/>
            <person name="Odell C."/>
            <person name="Oliver K."/>
            <person name="O'Neil S."/>
            <person name="Pearson D."/>
            <person name="Quail M.A."/>
            <person name="Rabbinowitsch E."/>
            <person name="Rutherford K.M."/>
            <person name="Rutter S."/>
            <person name="Saunders D."/>
            <person name="Seeger K."/>
            <person name="Sharp S."/>
            <person name="Skelton J."/>
            <person name="Simmonds M.N."/>
            <person name="Squares R."/>
            <person name="Squares S."/>
            <person name="Stevens K."/>
            <person name="Taylor K."/>
            <person name="Taylor R.G."/>
            <person name="Tivey A."/>
            <person name="Walsh S.V."/>
            <person name="Warren T."/>
            <person name="Whitehead S."/>
            <person name="Woodward J.R."/>
            <person name="Volckaert G."/>
            <person name="Aert R."/>
            <person name="Robben J."/>
            <person name="Grymonprez B."/>
            <person name="Weltjens I."/>
            <person name="Vanstreels E."/>
            <person name="Rieger M."/>
            <person name="Schaefer M."/>
            <person name="Mueller-Auer S."/>
            <person name="Gabel C."/>
            <person name="Fuchs M."/>
            <person name="Duesterhoeft A."/>
            <person name="Fritzc C."/>
            <person name="Holzer E."/>
            <person name="Moestl D."/>
            <person name="Hilbert H."/>
            <person name="Borzym K."/>
            <person name="Langer I."/>
            <person name="Beck A."/>
            <person name="Lehrach H."/>
            <person name="Reinhardt R."/>
            <person name="Pohl T.M."/>
            <person name="Eger P."/>
            <person name="Zimmermann W."/>
            <person name="Wedler H."/>
            <person name="Wambutt R."/>
            <person name="Purnelle B."/>
            <person name="Goffeau A."/>
            <person name="Cadieu E."/>
            <person name="Dreano S."/>
            <person name="Gloux S."/>
            <person name="Lelaure V."/>
            <person name="Mottier S."/>
            <person name="Galibert F."/>
            <person name="Aves S.J."/>
            <person name="Xiang Z."/>
            <person name="Hunt C."/>
            <person name="Moore K."/>
            <person name="Hurst S.M."/>
            <person name="Lucas M."/>
            <person name="Rochet M."/>
            <person name="Gaillardin C."/>
            <person name="Tallada V.A."/>
            <person name="Garzon A."/>
            <person name="Thode G."/>
            <person name="Daga R.R."/>
            <person name="Cruzado L."/>
            <person name="Jimenez J."/>
            <person name="Sanchez M."/>
            <person name="del Rey F."/>
            <person name="Benito J."/>
            <person name="Dominguez A."/>
            <person name="Revuelta J.L."/>
            <person name="Moreno S."/>
            <person name="Armstrong J."/>
            <person name="Forsburg S.L."/>
            <person name="Cerutti L."/>
            <person name="Lowe T."/>
            <person name="McCombie W.R."/>
            <person name="Paulsen I."/>
            <person name="Potashkin J."/>
            <person name="Shpakovski G.V."/>
            <person name="Ussery D."/>
            <person name="Barrell B.G."/>
            <person name="Nurse P."/>
        </authorList>
    </citation>
    <scope>NUCLEOTIDE SEQUENCE [LARGE SCALE GENOMIC DNA]</scope>
    <source>
        <strain>972 / ATCC 24843</strain>
    </source>
</reference>
<reference key="3">
    <citation type="journal article" date="2011" name="Science">
        <title>Comparative functional genomics of the fission yeasts.</title>
        <authorList>
            <person name="Rhind N."/>
            <person name="Chen Z."/>
            <person name="Yassour M."/>
            <person name="Thompson D.A."/>
            <person name="Haas B.J."/>
            <person name="Habib N."/>
            <person name="Wapinski I."/>
            <person name="Roy S."/>
            <person name="Lin M.F."/>
            <person name="Heiman D.I."/>
            <person name="Young S.K."/>
            <person name="Furuya K."/>
            <person name="Guo Y."/>
            <person name="Pidoux A."/>
            <person name="Chen H.M."/>
            <person name="Robbertse B."/>
            <person name="Goldberg J.M."/>
            <person name="Aoki K."/>
            <person name="Bayne E.H."/>
            <person name="Berlin A.M."/>
            <person name="Desjardins C.A."/>
            <person name="Dobbs E."/>
            <person name="Dukaj L."/>
            <person name="Fan L."/>
            <person name="FitzGerald M.G."/>
            <person name="French C."/>
            <person name="Gujja S."/>
            <person name="Hansen K."/>
            <person name="Keifenheim D."/>
            <person name="Levin J.Z."/>
            <person name="Mosher R.A."/>
            <person name="Mueller C.A."/>
            <person name="Pfiffner J."/>
            <person name="Priest M."/>
            <person name="Russ C."/>
            <person name="Smialowska A."/>
            <person name="Swoboda P."/>
            <person name="Sykes S.M."/>
            <person name="Vaughn M."/>
            <person name="Vengrova S."/>
            <person name="Yoder R."/>
            <person name="Zeng Q."/>
            <person name="Allshire R."/>
            <person name="Baulcombe D."/>
            <person name="Birren B.W."/>
            <person name="Brown W."/>
            <person name="Ekwall K."/>
            <person name="Kellis M."/>
            <person name="Leatherwood J."/>
            <person name="Levin H."/>
            <person name="Margalit H."/>
            <person name="Martienssen R."/>
            <person name="Nieduszynski C.A."/>
            <person name="Spatafora J.W."/>
            <person name="Friedman N."/>
            <person name="Dalgaard J.Z."/>
            <person name="Baumann P."/>
            <person name="Niki H."/>
            <person name="Regev A."/>
            <person name="Nusbaum C."/>
        </authorList>
    </citation>
    <scope>REVISION OF GENE MODEL</scope>
</reference>
<reference key="4">
    <citation type="journal article" date="2006" name="Nat. Biotechnol.">
        <title>ORFeome cloning and global analysis of protein localization in the fission yeast Schizosaccharomyces pombe.</title>
        <authorList>
            <person name="Matsuyama A."/>
            <person name="Arai R."/>
            <person name="Yashiroda Y."/>
            <person name="Shirai A."/>
            <person name="Kamata A."/>
            <person name="Sekido S."/>
            <person name="Kobayashi Y."/>
            <person name="Hashimoto A."/>
            <person name="Hamamoto M."/>
            <person name="Hiraoka Y."/>
            <person name="Horinouchi S."/>
            <person name="Yoshida M."/>
        </authorList>
    </citation>
    <scope>SUBCELLULAR LOCATION [LARGE SCALE ANALYSIS]</scope>
</reference>
<proteinExistence type="evidence at protein level"/>
<accession>O14370</accession>
<accession>O94352</accession>
<organism>
    <name type="scientific">Schizosaccharomyces pombe (strain 972 / ATCC 24843)</name>
    <name type="common">Fission yeast</name>
    <dbReference type="NCBI Taxonomy" id="284812"/>
    <lineage>
        <taxon>Eukaryota</taxon>
        <taxon>Fungi</taxon>
        <taxon>Dikarya</taxon>
        <taxon>Ascomycota</taxon>
        <taxon>Taphrinomycotina</taxon>
        <taxon>Schizosaccharomycetes</taxon>
        <taxon>Schizosaccharomycetales</taxon>
        <taxon>Schizosaccharomycetaceae</taxon>
        <taxon>Schizosaccharomyces</taxon>
    </lineage>
</organism>
<evidence type="ECO:0000250" key="1"/>
<evidence type="ECO:0000255" key="2"/>
<evidence type="ECO:0000269" key="3">
    <source>
    </source>
</evidence>
<evidence type="ECO:0000269" key="4">
    <source>
    </source>
</evidence>
<evidence type="ECO:0000305" key="5"/>
<comment type="function">
    <text>Catalyzes the first reaction in the catabolism of the essential branched chain amino acids leucine, isoleucine, and valine.</text>
</comment>
<comment type="catalytic activity">
    <reaction evidence="4">
        <text>L-leucine + 2-oxoglutarate = 4-methyl-2-oxopentanoate + L-glutamate</text>
        <dbReference type="Rhea" id="RHEA:18321"/>
        <dbReference type="ChEBI" id="CHEBI:16810"/>
        <dbReference type="ChEBI" id="CHEBI:17865"/>
        <dbReference type="ChEBI" id="CHEBI:29985"/>
        <dbReference type="ChEBI" id="CHEBI:57427"/>
        <dbReference type="EC" id="2.6.1.42"/>
    </reaction>
</comment>
<comment type="catalytic activity">
    <reaction evidence="4">
        <text>L-isoleucine + 2-oxoglutarate = (S)-3-methyl-2-oxopentanoate + L-glutamate</text>
        <dbReference type="Rhea" id="RHEA:24801"/>
        <dbReference type="ChEBI" id="CHEBI:16810"/>
        <dbReference type="ChEBI" id="CHEBI:29985"/>
        <dbReference type="ChEBI" id="CHEBI:35146"/>
        <dbReference type="ChEBI" id="CHEBI:58045"/>
        <dbReference type="EC" id="2.6.1.42"/>
    </reaction>
</comment>
<comment type="catalytic activity">
    <reaction evidence="4">
        <text>L-valine + 2-oxoglutarate = 3-methyl-2-oxobutanoate + L-glutamate</text>
        <dbReference type="Rhea" id="RHEA:24813"/>
        <dbReference type="ChEBI" id="CHEBI:11851"/>
        <dbReference type="ChEBI" id="CHEBI:16810"/>
        <dbReference type="ChEBI" id="CHEBI:29985"/>
        <dbReference type="ChEBI" id="CHEBI:57762"/>
        <dbReference type="EC" id="2.6.1.42"/>
    </reaction>
</comment>
<comment type="cofactor">
    <cofactor>
        <name>pyridoxal 5'-phosphate</name>
        <dbReference type="ChEBI" id="CHEBI:597326"/>
    </cofactor>
</comment>
<comment type="subcellular location">
    <subcellularLocation>
        <location evidence="5">Mitochondrion</location>
    </subcellularLocation>
    <subcellularLocation>
        <location evidence="3">Nucleus</location>
    </subcellularLocation>
    <subcellularLocation>
        <location evidence="3">Cytoplasm</location>
    </subcellularLocation>
</comment>
<comment type="similarity">
    <text evidence="5">Belongs to the class-IV pyridoxal-phosphate-dependent aminotransferase family.</text>
</comment>
<comment type="sequence caution" evidence="5">
    <conflict type="erroneous gene model prediction">
        <sequence resource="EMBL-CDS" id="AAC39352"/>
    </conflict>
</comment>
<name>BCA1_SCHPO</name>